<keyword id="KW-0030">Aminoacyl-tRNA synthetase</keyword>
<keyword id="KW-0067">ATP-binding</keyword>
<keyword id="KW-0963">Cytoplasm</keyword>
<keyword id="KW-0436">Ligase</keyword>
<keyword id="KW-0479">Metal-binding</keyword>
<keyword id="KW-0547">Nucleotide-binding</keyword>
<keyword id="KW-0648">Protein biosynthesis</keyword>
<keyword id="KW-1185">Reference proteome</keyword>
<keyword id="KW-0694">RNA-binding</keyword>
<keyword id="KW-0820">tRNA-binding</keyword>
<keyword id="KW-0862">Zinc</keyword>
<accession>A5GPF9</accession>
<evidence type="ECO:0000255" key="1">
    <source>
        <dbReference type="HAMAP-Rule" id="MF_00036"/>
    </source>
</evidence>
<comment type="function">
    <text evidence="1">Catalyzes the attachment of alanine to tRNA(Ala) in a two-step reaction: alanine is first activated by ATP to form Ala-AMP and then transferred to the acceptor end of tRNA(Ala). Also edits incorrectly charged Ser-tRNA(Ala) and Gly-tRNA(Ala) via its editing domain.</text>
</comment>
<comment type="catalytic activity">
    <reaction evidence="1">
        <text>tRNA(Ala) + L-alanine + ATP = L-alanyl-tRNA(Ala) + AMP + diphosphate</text>
        <dbReference type="Rhea" id="RHEA:12540"/>
        <dbReference type="Rhea" id="RHEA-COMP:9657"/>
        <dbReference type="Rhea" id="RHEA-COMP:9923"/>
        <dbReference type="ChEBI" id="CHEBI:30616"/>
        <dbReference type="ChEBI" id="CHEBI:33019"/>
        <dbReference type="ChEBI" id="CHEBI:57972"/>
        <dbReference type="ChEBI" id="CHEBI:78442"/>
        <dbReference type="ChEBI" id="CHEBI:78497"/>
        <dbReference type="ChEBI" id="CHEBI:456215"/>
        <dbReference type="EC" id="6.1.1.7"/>
    </reaction>
</comment>
<comment type="cofactor">
    <cofactor evidence="1">
        <name>Zn(2+)</name>
        <dbReference type="ChEBI" id="CHEBI:29105"/>
    </cofactor>
    <text evidence="1">Binds 1 zinc ion per subunit.</text>
</comment>
<comment type="subcellular location">
    <subcellularLocation>
        <location evidence="1">Cytoplasm</location>
    </subcellularLocation>
</comment>
<comment type="domain">
    <text evidence="1">Consists of three domains; the N-terminal catalytic domain, the editing domain and the C-terminal C-Ala domain. The editing domain removes incorrectly charged amino acids, while the C-Ala domain, along with tRNA(Ala), serves as a bridge to cooperatively bring together the editing and aminoacylation centers thus stimulating deacylation of misacylated tRNAs.</text>
</comment>
<comment type="similarity">
    <text evidence="1">Belongs to the class-II aminoacyl-tRNA synthetase family.</text>
</comment>
<name>SYA_SYNPW</name>
<reference key="1">
    <citation type="submission" date="2006-05" db="EMBL/GenBank/DDBJ databases">
        <authorList>
            <consortium name="Genoscope"/>
        </authorList>
    </citation>
    <scope>NUCLEOTIDE SEQUENCE [LARGE SCALE GENOMIC DNA]</scope>
    <source>
        <strain>WH7803</strain>
    </source>
</reference>
<protein>
    <recommendedName>
        <fullName evidence="1">Alanine--tRNA ligase</fullName>
        <ecNumber evidence="1">6.1.1.7</ecNumber>
    </recommendedName>
    <alternativeName>
        <fullName evidence="1">Alanyl-tRNA synthetase</fullName>
        <shortName evidence="1">AlaRS</shortName>
    </alternativeName>
</protein>
<organism>
    <name type="scientific">Synechococcus sp. (strain WH7803)</name>
    <dbReference type="NCBI Taxonomy" id="32051"/>
    <lineage>
        <taxon>Bacteria</taxon>
        <taxon>Bacillati</taxon>
        <taxon>Cyanobacteriota</taxon>
        <taxon>Cyanophyceae</taxon>
        <taxon>Synechococcales</taxon>
        <taxon>Synechococcaceae</taxon>
        <taxon>Synechococcus</taxon>
    </lineage>
</organism>
<proteinExistence type="inferred from homology"/>
<gene>
    <name evidence="1" type="primary">alaS</name>
    <name type="ordered locus">SynWH7803_2398</name>
</gene>
<feature type="chain" id="PRO_0000347843" description="Alanine--tRNA ligase">
    <location>
        <begin position="1"/>
        <end position="891"/>
    </location>
</feature>
<feature type="binding site" evidence="1">
    <location>
        <position position="574"/>
    </location>
    <ligand>
        <name>Zn(2+)</name>
        <dbReference type="ChEBI" id="CHEBI:29105"/>
    </ligand>
</feature>
<feature type="binding site" evidence="1">
    <location>
        <position position="578"/>
    </location>
    <ligand>
        <name>Zn(2+)</name>
        <dbReference type="ChEBI" id="CHEBI:29105"/>
    </ligand>
</feature>
<feature type="binding site" evidence="1">
    <location>
        <position position="676"/>
    </location>
    <ligand>
        <name>Zn(2+)</name>
        <dbReference type="ChEBI" id="CHEBI:29105"/>
    </ligand>
</feature>
<feature type="binding site" evidence="1">
    <location>
        <position position="680"/>
    </location>
    <ligand>
        <name>Zn(2+)</name>
        <dbReference type="ChEBI" id="CHEBI:29105"/>
    </ligand>
</feature>
<dbReference type="EC" id="6.1.1.7" evidence="1"/>
<dbReference type="EMBL" id="CT971583">
    <property type="protein sequence ID" value="CAK24824.1"/>
    <property type="molecule type" value="Genomic_DNA"/>
</dbReference>
<dbReference type="SMR" id="A5GPF9"/>
<dbReference type="STRING" id="32051.SynWH7803_2398"/>
<dbReference type="KEGG" id="syx:SynWH7803_2398"/>
<dbReference type="eggNOG" id="COG0013">
    <property type="taxonomic scope" value="Bacteria"/>
</dbReference>
<dbReference type="HOGENOM" id="CLU_004485_1_1_3"/>
<dbReference type="OrthoDB" id="9803884at2"/>
<dbReference type="Proteomes" id="UP000001566">
    <property type="component" value="Chromosome"/>
</dbReference>
<dbReference type="GO" id="GO:0005829">
    <property type="term" value="C:cytosol"/>
    <property type="evidence" value="ECO:0007669"/>
    <property type="project" value="TreeGrafter"/>
</dbReference>
<dbReference type="GO" id="GO:0004813">
    <property type="term" value="F:alanine-tRNA ligase activity"/>
    <property type="evidence" value="ECO:0007669"/>
    <property type="project" value="UniProtKB-UniRule"/>
</dbReference>
<dbReference type="GO" id="GO:0002161">
    <property type="term" value="F:aminoacyl-tRNA deacylase activity"/>
    <property type="evidence" value="ECO:0007669"/>
    <property type="project" value="TreeGrafter"/>
</dbReference>
<dbReference type="GO" id="GO:0005524">
    <property type="term" value="F:ATP binding"/>
    <property type="evidence" value="ECO:0007669"/>
    <property type="project" value="UniProtKB-UniRule"/>
</dbReference>
<dbReference type="GO" id="GO:0000049">
    <property type="term" value="F:tRNA binding"/>
    <property type="evidence" value="ECO:0007669"/>
    <property type="project" value="UniProtKB-KW"/>
</dbReference>
<dbReference type="GO" id="GO:0008270">
    <property type="term" value="F:zinc ion binding"/>
    <property type="evidence" value="ECO:0007669"/>
    <property type="project" value="UniProtKB-UniRule"/>
</dbReference>
<dbReference type="GO" id="GO:0006419">
    <property type="term" value="P:alanyl-tRNA aminoacylation"/>
    <property type="evidence" value="ECO:0007669"/>
    <property type="project" value="UniProtKB-UniRule"/>
</dbReference>
<dbReference type="CDD" id="cd00673">
    <property type="entry name" value="AlaRS_core"/>
    <property type="match status" value="1"/>
</dbReference>
<dbReference type="FunFam" id="3.10.310.40:FF:000001">
    <property type="entry name" value="Alanine--tRNA ligase"/>
    <property type="match status" value="1"/>
</dbReference>
<dbReference type="FunFam" id="3.30.54.20:FF:000001">
    <property type="entry name" value="Alanine--tRNA ligase"/>
    <property type="match status" value="1"/>
</dbReference>
<dbReference type="FunFam" id="3.30.930.10:FF:000004">
    <property type="entry name" value="Alanine--tRNA ligase"/>
    <property type="match status" value="1"/>
</dbReference>
<dbReference type="FunFam" id="3.30.980.10:FF:000004">
    <property type="entry name" value="Alanine--tRNA ligase, cytoplasmic"/>
    <property type="match status" value="1"/>
</dbReference>
<dbReference type="Gene3D" id="2.40.30.130">
    <property type="match status" value="1"/>
</dbReference>
<dbReference type="Gene3D" id="3.10.310.40">
    <property type="match status" value="1"/>
</dbReference>
<dbReference type="Gene3D" id="3.30.54.20">
    <property type="match status" value="1"/>
</dbReference>
<dbReference type="Gene3D" id="6.10.250.550">
    <property type="match status" value="1"/>
</dbReference>
<dbReference type="Gene3D" id="3.30.930.10">
    <property type="entry name" value="Bira Bifunctional Protein, Domain 2"/>
    <property type="match status" value="1"/>
</dbReference>
<dbReference type="Gene3D" id="3.30.980.10">
    <property type="entry name" value="Threonyl-trna Synthetase, Chain A, domain 2"/>
    <property type="match status" value="1"/>
</dbReference>
<dbReference type="HAMAP" id="MF_00036_B">
    <property type="entry name" value="Ala_tRNA_synth_B"/>
    <property type="match status" value="1"/>
</dbReference>
<dbReference type="InterPro" id="IPR045864">
    <property type="entry name" value="aa-tRNA-synth_II/BPL/LPL"/>
</dbReference>
<dbReference type="InterPro" id="IPR002318">
    <property type="entry name" value="Ala-tRNA-lgiase_IIc"/>
</dbReference>
<dbReference type="InterPro" id="IPR018162">
    <property type="entry name" value="Ala-tRNA-ligase_IIc_anticod-bd"/>
</dbReference>
<dbReference type="InterPro" id="IPR018165">
    <property type="entry name" value="Ala-tRNA-synth_IIc_core"/>
</dbReference>
<dbReference type="InterPro" id="IPR018164">
    <property type="entry name" value="Ala-tRNA-synth_IIc_N"/>
</dbReference>
<dbReference type="InterPro" id="IPR050058">
    <property type="entry name" value="Ala-tRNA_ligase"/>
</dbReference>
<dbReference type="InterPro" id="IPR023033">
    <property type="entry name" value="Ala_tRNA_ligase_euk/bac"/>
</dbReference>
<dbReference type="InterPro" id="IPR003156">
    <property type="entry name" value="DHHA1_dom"/>
</dbReference>
<dbReference type="InterPro" id="IPR018163">
    <property type="entry name" value="Thr/Ala-tRNA-synth_IIc_edit"/>
</dbReference>
<dbReference type="InterPro" id="IPR009000">
    <property type="entry name" value="Transl_B-barrel_sf"/>
</dbReference>
<dbReference type="InterPro" id="IPR012947">
    <property type="entry name" value="tRNA_SAD"/>
</dbReference>
<dbReference type="NCBIfam" id="TIGR00344">
    <property type="entry name" value="alaS"/>
    <property type="match status" value="1"/>
</dbReference>
<dbReference type="PANTHER" id="PTHR11777:SF9">
    <property type="entry name" value="ALANINE--TRNA LIGASE, CYTOPLASMIC"/>
    <property type="match status" value="1"/>
</dbReference>
<dbReference type="PANTHER" id="PTHR11777">
    <property type="entry name" value="ALANYL-TRNA SYNTHETASE"/>
    <property type="match status" value="1"/>
</dbReference>
<dbReference type="Pfam" id="PF02272">
    <property type="entry name" value="DHHA1"/>
    <property type="match status" value="1"/>
</dbReference>
<dbReference type="Pfam" id="PF01411">
    <property type="entry name" value="tRNA-synt_2c"/>
    <property type="match status" value="1"/>
</dbReference>
<dbReference type="Pfam" id="PF07973">
    <property type="entry name" value="tRNA_SAD"/>
    <property type="match status" value="1"/>
</dbReference>
<dbReference type="PRINTS" id="PR00980">
    <property type="entry name" value="TRNASYNTHALA"/>
</dbReference>
<dbReference type="SMART" id="SM00863">
    <property type="entry name" value="tRNA_SAD"/>
    <property type="match status" value="1"/>
</dbReference>
<dbReference type="SUPFAM" id="SSF55681">
    <property type="entry name" value="Class II aaRS and biotin synthetases"/>
    <property type="match status" value="1"/>
</dbReference>
<dbReference type="SUPFAM" id="SSF101353">
    <property type="entry name" value="Putative anticodon-binding domain of alanyl-tRNA synthetase (AlaRS)"/>
    <property type="match status" value="1"/>
</dbReference>
<dbReference type="SUPFAM" id="SSF55186">
    <property type="entry name" value="ThrRS/AlaRS common domain"/>
    <property type="match status" value="1"/>
</dbReference>
<dbReference type="SUPFAM" id="SSF50447">
    <property type="entry name" value="Translation proteins"/>
    <property type="match status" value="1"/>
</dbReference>
<dbReference type="PROSITE" id="PS50860">
    <property type="entry name" value="AA_TRNA_LIGASE_II_ALA"/>
    <property type="match status" value="1"/>
</dbReference>
<sequence length="891" mass="95755">MAVARSSRTDAARPRTGAEIRDAFLAFFEERGHKRMPSASLVPEDPTVLLTIAGMLPFKPIFLGQQERPAPCATSSQKCIRTNDIENVGRTARHHTFFEMLGNFSFGDYFKQQAIEWAWELSTGVFGLDPKNLVVSVFRDDDEAEQIWREVVGVNPKRIIRMDEEDNFWASGPTGPCGPCSEIYYDFKPELGDDGIDLEDDDRFIEFYNLVFMQSNRDAEGTLTPLANRNIDTGMGLERMAQILQKVPNNYETDLIFPLIQAAAERAGVDYHQLDEKGKTSLKVIGDHSRAVTQLISDGVTASNLGRGYILRRLLRRVVRHGRLLGIDKPFLQAMGEASIALMQSAHPQLSERREVILAELQREEARFLETLERGEKLLADVLAAKPKQISGEQAFELYDTYGFPLELTQEIAEEHGLAVDLAGFETAMEQQRQRAKAAAVSIDLTLQDAIDQVAAGLQDTEFRGYEQLEQSSSIQALVVNGEPAQSAVAGDAVQVVLDVTPFYGEGGGQIGDRGTLVADGQAGDGLIVMVESVSRNRSVFVHSGRVQRGALAVGDVVHGRVDRACRRRAQANHTATHLLQAALKQEVDPGIGQAGSLVSFDRLRFDFHCPRAVTAEELERIESLINGWIADAHALEVQEMAIEKAKAAGAVAMFGEKYADVVRVVDVPGVSMELCGGTHVANTAEIGLFKIVSESGVAAGIRRIEAVAGAAVLPYLNERDAVVKQLGERFKAQPGEIIERVTALQDELKATGKALAAAQAELAVAKSAALATKAVAVGDFQLLVERLDGVDGTGLQGAAQSLADQLGDGAAVVLGGLPDPADQGKVILVAAFGKAVIAQGQQAGKFIGGIAKLCGGGGGGRPNLAQAGGRDGAALASALEAASHQLRESL</sequence>